<organism>
    <name type="scientific">Princisia vanwaerebeki</name>
    <name type="common">Tiger hisser roach</name>
    <dbReference type="NCBI Taxonomy" id="1661849"/>
    <lineage>
        <taxon>Eukaryota</taxon>
        <taxon>Metazoa</taxon>
        <taxon>Ecdysozoa</taxon>
        <taxon>Arthropoda</taxon>
        <taxon>Hexapoda</taxon>
        <taxon>Insecta</taxon>
        <taxon>Pterygota</taxon>
        <taxon>Neoptera</taxon>
        <taxon>Polyneoptera</taxon>
        <taxon>Dictyoptera</taxon>
        <taxon>Blattodea</taxon>
        <taxon>Blaberoidea</taxon>
        <taxon>Blaberidae</taxon>
        <taxon>Oxyhaloinae</taxon>
        <taxon>Princisia</taxon>
    </lineage>
</organism>
<name>SK1_PRIVA</name>
<reference evidence="5" key="1">
    <citation type="journal article" date="2009" name="BMC Evol. Biol.">
        <title>A proteomic approach for studying insect phylogeny: CAPA peptides of ancient insect taxa (Dictyoptera, Blattoptera) as a test case.</title>
        <authorList>
            <person name="Roth S."/>
            <person name="Fromm B."/>
            <person name="Gaede G."/>
            <person name="Predel R."/>
        </authorList>
    </citation>
    <scope>PROTEIN SEQUENCE</scope>
    <scope>AMIDATION AT PHE-11</scope>
    <source>
        <tissue evidence="3">Corpora cardiaca</tissue>
    </source>
</reference>
<feature type="peptide" id="PRO_0000378895" description="Sulfakinin-1" evidence="3">
    <location>
        <begin position="1"/>
        <end position="11"/>
    </location>
</feature>
<feature type="modified residue" description="Sulfotyrosine" evidence="1">
    <location>
        <position position="6"/>
    </location>
</feature>
<feature type="modified residue" description="Phenylalanine amide" evidence="3">
    <location>
        <position position="11"/>
    </location>
</feature>
<comment type="function">
    <text evidence="1">Myotropic peptide.</text>
</comment>
<comment type="subcellular location">
    <subcellularLocation>
        <location evidence="5">Secreted</location>
    </subcellularLocation>
</comment>
<comment type="similarity">
    <text evidence="2">Belongs to the gastrin/cholecystokinin family.</text>
</comment>
<keyword id="KW-0027">Amidation</keyword>
<keyword id="KW-0903">Direct protein sequencing</keyword>
<keyword id="KW-0372">Hormone</keyword>
<keyword id="KW-0527">Neuropeptide</keyword>
<keyword id="KW-0964">Secreted</keyword>
<keyword id="KW-0765">Sulfation</keyword>
<proteinExistence type="evidence at protein level"/>
<accession>P85749</accession>
<dbReference type="GO" id="GO:0005576">
    <property type="term" value="C:extracellular region"/>
    <property type="evidence" value="ECO:0007669"/>
    <property type="project" value="UniProtKB-SubCell"/>
</dbReference>
<dbReference type="GO" id="GO:0005179">
    <property type="term" value="F:hormone activity"/>
    <property type="evidence" value="ECO:0007669"/>
    <property type="project" value="UniProtKB-KW"/>
</dbReference>
<dbReference type="GO" id="GO:0007218">
    <property type="term" value="P:neuropeptide signaling pathway"/>
    <property type="evidence" value="ECO:0007669"/>
    <property type="project" value="UniProtKB-KW"/>
</dbReference>
<dbReference type="InterPro" id="IPR013152">
    <property type="entry name" value="Gastrin/cholecystokinin_CS"/>
</dbReference>
<dbReference type="InterPro" id="IPR013259">
    <property type="entry name" value="Sulfakinin"/>
</dbReference>
<dbReference type="Pfam" id="PF08257">
    <property type="entry name" value="Sulfakinin"/>
    <property type="match status" value="1"/>
</dbReference>
<dbReference type="PROSITE" id="PS00259">
    <property type="entry name" value="GASTRIN"/>
    <property type="match status" value="1"/>
</dbReference>
<protein>
    <recommendedName>
        <fullName evidence="4">Sulfakinin-1</fullName>
        <shortName evidence="4">PriVa-SK-1</shortName>
    </recommendedName>
</protein>
<sequence length="11" mass="1459">EQFEDYGHMRF</sequence>
<evidence type="ECO:0000250" key="1">
    <source>
        <dbReference type="UniProtKB" id="P41493"/>
    </source>
</evidence>
<evidence type="ECO:0000255" key="2"/>
<evidence type="ECO:0000269" key="3">
    <source>
    </source>
</evidence>
<evidence type="ECO:0000303" key="4">
    <source>
    </source>
</evidence>
<evidence type="ECO:0000305" key="5"/>